<reference key="1">
    <citation type="submission" date="2006-09" db="EMBL/GenBank/DDBJ databases">
        <authorList>
            <consortium name="The Klebsiella pneumonia Genome Sequencing Project"/>
            <person name="McClelland M."/>
            <person name="Sanderson E.K."/>
            <person name="Spieth J."/>
            <person name="Clifton W.S."/>
            <person name="Latreille P."/>
            <person name="Sabo A."/>
            <person name="Pepin K."/>
            <person name="Bhonagiri V."/>
            <person name="Porwollik S."/>
            <person name="Ali J."/>
            <person name="Wilson R.K."/>
        </authorList>
    </citation>
    <scope>NUCLEOTIDE SEQUENCE [LARGE SCALE GENOMIC DNA]</scope>
    <source>
        <strain>ATCC 700721 / MGH 78578</strain>
    </source>
</reference>
<gene>
    <name evidence="1" type="primary">pyrH</name>
    <name type="ordered locus">KPN78578_01830</name>
    <name type="ORF">KPN_00184</name>
</gene>
<dbReference type="EC" id="2.7.4.22" evidence="1"/>
<dbReference type="EMBL" id="CP000647">
    <property type="protein sequence ID" value="ABR75644.1"/>
    <property type="molecule type" value="Genomic_DNA"/>
</dbReference>
<dbReference type="RefSeq" id="WP_002889306.1">
    <property type="nucleotide sequence ID" value="NC_009648.1"/>
</dbReference>
<dbReference type="SMR" id="A6T4X3"/>
<dbReference type="STRING" id="272620.KPN_00184"/>
<dbReference type="jPOST" id="A6T4X3"/>
<dbReference type="PaxDb" id="272620-KPN_00184"/>
<dbReference type="EnsemblBacteria" id="ABR75644">
    <property type="protein sequence ID" value="ABR75644"/>
    <property type="gene ID" value="KPN_00184"/>
</dbReference>
<dbReference type="GeneID" id="93252383"/>
<dbReference type="KEGG" id="kpn:KPN_00184"/>
<dbReference type="HOGENOM" id="CLU_033861_0_0_6"/>
<dbReference type="UniPathway" id="UPA00159">
    <property type="reaction ID" value="UER00275"/>
</dbReference>
<dbReference type="Proteomes" id="UP000000265">
    <property type="component" value="Chromosome"/>
</dbReference>
<dbReference type="GO" id="GO:0005829">
    <property type="term" value="C:cytosol"/>
    <property type="evidence" value="ECO:0007669"/>
    <property type="project" value="TreeGrafter"/>
</dbReference>
<dbReference type="GO" id="GO:0005524">
    <property type="term" value="F:ATP binding"/>
    <property type="evidence" value="ECO:0007669"/>
    <property type="project" value="UniProtKB-KW"/>
</dbReference>
<dbReference type="GO" id="GO:0033862">
    <property type="term" value="F:UMP kinase activity"/>
    <property type="evidence" value="ECO:0007669"/>
    <property type="project" value="UniProtKB-EC"/>
</dbReference>
<dbReference type="GO" id="GO:0044210">
    <property type="term" value="P:'de novo' CTP biosynthetic process"/>
    <property type="evidence" value="ECO:0007669"/>
    <property type="project" value="UniProtKB-UniRule"/>
</dbReference>
<dbReference type="GO" id="GO:0006225">
    <property type="term" value="P:UDP biosynthetic process"/>
    <property type="evidence" value="ECO:0007669"/>
    <property type="project" value="TreeGrafter"/>
</dbReference>
<dbReference type="CDD" id="cd04254">
    <property type="entry name" value="AAK_UMPK-PyrH-Ec"/>
    <property type="match status" value="1"/>
</dbReference>
<dbReference type="FunFam" id="3.40.1160.10:FF:000001">
    <property type="entry name" value="Uridylate kinase"/>
    <property type="match status" value="1"/>
</dbReference>
<dbReference type="Gene3D" id="3.40.1160.10">
    <property type="entry name" value="Acetylglutamate kinase-like"/>
    <property type="match status" value="1"/>
</dbReference>
<dbReference type="HAMAP" id="MF_01220_B">
    <property type="entry name" value="PyrH_B"/>
    <property type="match status" value="1"/>
</dbReference>
<dbReference type="InterPro" id="IPR036393">
    <property type="entry name" value="AceGlu_kinase-like_sf"/>
</dbReference>
<dbReference type="InterPro" id="IPR001048">
    <property type="entry name" value="Asp/Glu/Uridylate_kinase"/>
</dbReference>
<dbReference type="InterPro" id="IPR011817">
    <property type="entry name" value="Uridylate_kinase"/>
</dbReference>
<dbReference type="InterPro" id="IPR015963">
    <property type="entry name" value="Uridylate_kinase_bac"/>
</dbReference>
<dbReference type="NCBIfam" id="TIGR02075">
    <property type="entry name" value="pyrH_bact"/>
    <property type="match status" value="1"/>
</dbReference>
<dbReference type="PANTHER" id="PTHR42833">
    <property type="entry name" value="URIDYLATE KINASE"/>
    <property type="match status" value="1"/>
</dbReference>
<dbReference type="PANTHER" id="PTHR42833:SF4">
    <property type="entry name" value="URIDYLATE KINASE PUMPKIN, CHLOROPLASTIC"/>
    <property type="match status" value="1"/>
</dbReference>
<dbReference type="Pfam" id="PF00696">
    <property type="entry name" value="AA_kinase"/>
    <property type="match status" value="1"/>
</dbReference>
<dbReference type="PIRSF" id="PIRSF005650">
    <property type="entry name" value="Uridylate_kin"/>
    <property type="match status" value="1"/>
</dbReference>
<dbReference type="SUPFAM" id="SSF53633">
    <property type="entry name" value="Carbamate kinase-like"/>
    <property type="match status" value="1"/>
</dbReference>
<protein>
    <recommendedName>
        <fullName evidence="1">Uridylate kinase</fullName>
        <shortName evidence="1">UK</shortName>
        <ecNumber evidence="1">2.7.4.22</ecNumber>
    </recommendedName>
    <alternativeName>
        <fullName evidence="1">Uridine monophosphate kinase</fullName>
        <shortName evidence="1">UMP kinase</shortName>
        <shortName evidence="1">UMPK</shortName>
    </alternativeName>
</protein>
<organism>
    <name type="scientific">Klebsiella pneumoniae subsp. pneumoniae (strain ATCC 700721 / MGH 78578)</name>
    <dbReference type="NCBI Taxonomy" id="272620"/>
    <lineage>
        <taxon>Bacteria</taxon>
        <taxon>Pseudomonadati</taxon>
        <taxon>Pseudomonadota</taxon>
        <taxon>Gammaproteobacteria</taxon>
        <taxon>Enterobacterales</taxon>
        <taxon>Enterobacteriaceae</taxon>
        <taxon>Klebsiella/Raoultella group</taxon>
        <taxon>Klebsiella</taxon>
        <taxon>Klebsiella pneumoniae complex</taxon>
    </lineage>
</organism>
<evidence type="ECO:0000255" key="1">
    <source>
        <dbReference type="HAMAP-Rule" id="MF_01220"/>
    </source>
</evidence>
<comment type="function">
    <text evidence="1">Catalyzes the reversible phosphorylation of UMP to UDP.</text>
</comment>
<comment type="catalytic activity">
    <reaction evidence="1">
        <text>UMP + ATP = UDP + ADP</text>
        <dbReference type="Rhea" id="RHEA:24400"/>
        <dbReference type="ChEBI" id="CHEBI:30616"/>
        <dbReference type="ChEBI" id="CHEBI:57865"/>
        <dbReference type="ChEBI" id="CHEBI:58223"/>
        <dbReference type="ChEBI" id="CHEBI:456216"/>
        <dbReference type="EC" id="2.7.4.22"/>
    </reaction>
</comment>
<comment type="activity regulation">
    <text evidence="1">Allosterically activated by GTP. Inhibited by UTP.</text>
</comment>
<comment type="pathway">
    <text evidence="1">Pyrimidine metabolism; CTP biosynthesis via de novo pathway; UDP from UMP (UMPK route): step 1/1.</text>
</comment>
<comment type="subunit">
    <text evidence="1">Homohexamer.</text>
</comment>
<comment type="subcellular location">
    <subcellularLocation>
        <location evidence="1">Cytoplasm</location>
    </subcellularLocation>
</comment>
<comment type="similarity">
    <text evidence="1">Belongs to the UMP kinase family.</text>
</comment>
<sequence length="241" mass="25955">MATNAKPVYKRILLKLSGEALQGSEGFGIDASILDRMAQEIKELVELGIQVGVVIGGGNLFRGAGLAKAGMNRVVGDHMGMLATVMNGLAMRDALHRAYVNARLMSAIPLNGVCDNYSWAEAISLLRNNRVVILSAGTGNPFFTTDSAACLRGIEIEADVVLKATKVDGVFTADPAKDPSATMYDQLTYSEVLEKELKVMDLAAFTLARDHKLPIRVFNMNKPGALRRVVMGEKEGTLITE</sequence>
<feature type="chain" id="PRO_1000053936" description="Uridylate kinase">
    <location>
        <begin position="1"/>
        <end position="241"/>
    </location>
</feature>
<feature type="region of interest" description="Involved in allosteric activation by GTP" evidence="1">
    <location>
        <begin position="23"/>
        <end position="28"/>
    </location>
</feature>
<feature type="binding site" evidence="1">
    <location>
        <begin position="15"/>
        <end position="18"/>
    </location>
    <ligand>
        <name>ATP</name>
        <dbReference type="ChEBI" id="CHEBI:30616"/>
    </ligand>
</feature>
<feature type="binding site" evidence="1">
    <location>
        <position position="57"/>
    </location>
    <ligand>
        <name>UMP</name>
        <dbReference type="ChEBI" id="CHEBI:57865"/>
    </ligand>
</feature>
<feature type="binding site" evidence="1">
    <location>
        <position position="58"/>
    </location>
    <ligand>
        <name>ATP</name>
        <dbReference type="ChEBI" id="CHEBI:30616"/>
    </ligand>
</feature>
<feature type="binding site" evidence="1">
    <location>
        <position position="62"/>
    </location>
    <ligand>
        <name>ATP</name>
        <dbReference type="ChEBI" id="CHEBI:30616"/>
    </ligand>
</feature>
<feature type="binding site" evidence="1">
    <location>
        <position position="77"/>
    </location>
    <ligand>
        <name>UMP</name>
        <dbReference type="ChEBI" id="CHEBI:57865"/>
    </ligand>
</feature>
<feature type="binding site" evidence="1">
    <location>
        <begin position="138"/>
        <end position="145"/>
    </location>
    <ligand>
        <name>UMP</name>
        <dbReference type="ChEBI" id="CHEBI:57865"/>
    </ligand>
</feature>
<feature type="binding site" evidence="1">
    <location>
        <position position="165"/>
    </location>
    <ligand>
        <name>ATP</name>
        <dbReference type="ChEBI" id="CHEBI:30616"/>
    </ligand>
</feature>
<feature type="binding site" evidence="1">
    <location>
        <position position="171"/>
    </location>
    <ligand>
        <name>ATP</name>
        <dbReference type="ChEBI" id="CHEBI:30616"/>
    </ligand>
</feature>
<feature type="binding site" evidence="1">
    <location>
        <position position="174"/>
    </location>
    <ligand>
        <name>ATP</name>
        <dbReference type="ChEBI" id="CHEBI:30616"/>
    </ligand>
</feature>
<accession>A6T4X3</accession>
<name>PYRH_KLEP7</name>
<proteinExistence type="inferred from homology"/>
<keyword id="KW-0021">Allosteric enzyme</keyword>
<keyword id="KW-0067">ATP-binding</keyword>
<keyword id="KW-0963">Cytoplasm</keyword>
<keyword id="KW-0418">Kinase</keyword>
<keyword id="KW-0547">Nucleotide-binding</keyword>
<keyword id="KW-0665">Pyrimidine biosynthesis</keyword>
<keyword id="KW-0808">Transferase</keyword>